<dbReference type="EC" id="7.4.2.8" evidence="2"/>
<dbReference type="EMBL" id="AE000516">
    <property type="protein sequence ID" value="AAK47680.1"/>
    <property type="molecule type" value="Genomic_DNA"/>
</dbReference>
<dbReference type="PIR" id="B70592">
    <property type="entry name" value="B70592"/>
</dbReference>
<dbReference type="SMR" id="P9WGP4"/>
<dbReference type="KEGG" id="mtc:MT3338"/>
<dbReference type="PATRIC" id="fig|83331.31.peg.3593"/>
<dbReference type="HOGENOM" id="CLU_005314_3_0_11"/>
<dbReference type="Proteomes" id="UP000001020">
    <property type="component" value="Chromosome"/>
</dbReference>
<dbReference type="GO" id="GO:0031522">
    <property type="term" value="C:cell envelope Sec protein transport complex"/>
    <property type="evidence" value="ECO:0007669"/>
    <property type="project" value="TreeGrafter"/>
</dbReference>
<dbReference type="GO" id="GO:0005829">
    <property type="term" value="C:cytosol"/>
    <property type="evidence" value="ECO:0007669"/>
    <property type="project" value="TreeGrafter"/>
</dbReference>
<dbReference type="GO" id="GO:0005886">
    <property type="term" value="C:plasma membrane"/>
    <property type="evidence" value="ECO:0007669"/>
    <property type="project" value="UniProtKB-SubCell"/>
</dbReference>
<dbReference type="GO" id="GO:0005524">
    <property type="term" value="F:ATP binding"/>
    <property type="evidence" value="ECO:0007669"/>
    <property type="project" value="UniProtKB-UniRule"/>
</dbReference>
<dbReference type="GO" id="GO:0008564">
    <property type="term" value="F:protein-exporting ATPase activity"/>
    <property type="evidence" value="ECO:0007669"/>
    <property type="project" value="UniProtKB-EC"/>
</dbReference>
<dbReference type="GO" id="GO:0065002">
    <property type="term" value="P:intracellular protein transmembrane transport"/>
    <property type="evidence" value="ECO:0007669"/>
    <property type="project" value="UniProtKB-UniRule"/>
</dbReference>
<dbReference type="GO" id="GO:0017038">
    <property type="term" value="P:protein import"/>
    <property type="evidence" value="ECO:0007669"/>
    <property type="project" value="InterPro"/>
</dbReference>
<dbReference type="GO" id="GO:0006605">
    <property type="term" value="P:protein targeting"/>
    <property type="evidence" value="ECO:0007669"/>
    <property type="project" value="UniProtKB-UniRule"/>
</dbReference>
<dbReference type="GO" id="GO:0043952">
    <property type="term" value="P:protein transport by the Sec complex"/>
    <property type="evidence" value="ECO:0007669"/>
    <property type="project" value="TreeGrafter"/>
</dbReference>
<dbReference type="CDD" id="cd17928">
    <property type="entry name" value="DEXDc_SecA"/>
    <property type="match status" value="1"/>
</dbReference>
<dbReference type="CDD" id="cd18803">
    <property type="entry name" value="SF2_C_secA"/>
    <property type="match status" value="1"/>
</dbReference>
<dbReference type="FunFam" id="1.10.3060.10:FF:000002">
    <property type="entry name" value="Preprotein translocase subunit SecA"/>
    <property type="match status" value="1"/>
</dbReference>
<dbReference type="FunFam" id="3.40.50.300:FF:000113">
    <property type="entry name" value="Preprotein translocase subunit SecA"/>
    <property type="match status" value="1"/>
</dbReference>
<dbReference type="FunFam" id="3.40.50.300:FF:000334">
    <property type="entry name" value="Protein translocase subunit SecA"/>
    <property type="match status" value="1"/>
</dbReference>
<dbReference type="FunFam" id="3.90.1440.10:FF:000002">
    <property type="entry name" value="Protein translocase subunit SecA"/>
    <property type="match status" value="1"/>
</dbReference>
<dbReference type="Gene3D" id="1.10.3060.10">
    <property type="entry name" value="Helical scaffold and wing domains of SecA"/>
    <property type="match status" value="1"/>
</dbReference>
<dbReference type="Gene3D" id="3.40.50.300">
    <property type="entry name" value="P-loop containing nucleotide triphosphate hydrolases"/>
    <property type="match status" value="2"/>
</dbReference>
<dbReference type="Gene3D" id="3.90.1440.10">
    <property type="entry name" value="SecA, preprotein cross-linking domain"/>
    <property type="match status" value="1"/>
</dbReference>
<dbReference type="HAMAP" id="MF_01382">
    <property type="entry name" value="SecA"/>
    <property type="match status" value="1"/>
</dbReference>
<dbReference type="InterPro" id="IPR014001">
    <property type="entry name" value="Helicase_ATP-bd"/>
</dbReference>
<dbReference type="InterPro" id="IPR001650">
    <property type="entry name" value="Helicase_C-like"/>
</dbReference>
<dbReference type="InterPro" id="IPR027417">
    <property type="entry name" value="P-loop_NTPase"/>
</dbReference>
<dbReference type="InterPro" id="IPR000185">
    <property type="entry name" value="SecA"/>
</dbReference>
<dbReference type="InterPro" id="IPR020937">
    <property type="entry name" value="SecA_CS"/>
</dbReference>
<dbReference type="InterPro" id="IPR011115">
    <property type="entry name" value="SecA_DEAD"/>
</dbReference>
<dbReference type="InterPro" id="IPR014018">
    <property type="entry name" value="SecA_motor_DEAD"/>
</dbReference>
<dbReference type="InterPro" id="IPR011130">
    <property type="entry name" value="SecA_preprotein_X-link_dom"/>
</dbReference>
<dbReference type="InterPro" id="IPR044722">
    <property type="entry name" value="SecA_SF2_C"/>
</dbReference>
<dbReference type="InterPro" id="IPR011116">
    <property type="entry name" value="SecA_Wing/Scaffold"/>
</dbReference>
<dbReference type="InterPro" id="IPR036266">
    <property type="entry name" value="SecA_Wing/Scaffold_sf"/>
</dbReference>
<dbReference type="InterPro" id="IPR036670">
    <property type="entry name" value="SecA_X-link_sf"/>
</dbReference>
<dbReference type="NCBIfam" id="NF009538">
    <property type="entry name" value="PRK12904.1"/>
    <property type="match status" value="1"/>
</dbReference>
<dbReference type="NCBIfam" id="TIGR00963">
    <property type="entry name" value="secA"/>
    <property type="match status" value="1"/>
</dbReference>
<dbReference type="PANTHER" id="PTHR30612:SF0">
    <property type="entry name" value="CHLOROPLAST PROTEIN-TRANSPORTING ATPASE"/>
    <property type="match status" value="1"/>
</dbReference>
<dbReference type="PANTHER" id="PTHR30612">
    <property type="entry name" value="SECA INNER MEMBRANE COMPONENT OF SEC PROTEIN SECRETION SYSTEM"/>
    <property type="match status" value="1"/>
</dbReference>
<dbReference type="Pfam" id="PF21090">
    <property type="entry name" value="P-loop_SecA"/>
    <property type="match status" value="1"/>
</dbReference>
<dbReference type="Pfam" id="PF07517">
    <property type="entry name" value="SecA_DEAD"/>
    <property type="match status" value="1"/>
</dbReference>
<dbReference type="Pfam" id="PF01043">
    <property type="entry name" value="SecA_PP_bind"/>
    <property type="match status" value="1"/>
</dbReference>
<dbReference type="Pfam" id="PF07516">
    <property type="entry name" value="SecA_SW"/>
    <property type="match status" value="1"/>
</dbReference>
<dbReference type="PRINTS" id="PR00906">
    <property type="entry name" value="SECA"/>
</dbReference>
<dbReference type="SMART" id="SM00957">
    <property type="entry name" value="SecA_DEAD"/>
    <property type="match status" value="1"/>
</dbReference>
<dbReference type="SMART" id="SM00958">
    <property type="entry name" value="SecA_PP_bind"/>
    <property type="match status" value="1"/>
</dbReference>
<dbReference type="SUPFAM" id="SSF81886">
    <property type="entry name" value="Helical scaffold and wing domains of SecA"/>
    <property type="match status" value="1"/>
</dbReference>
<dbReference type="SUPFAM" id="SSF52540">
    <property type="entry name" value="P-loop containing nucleoside triphosphate hydrolases"/>
    <property type="match status" value="2"/>
</dbReference>
<dbReference type="SUPFAM" id="SSF81767">
    <property type="entry name" value="Pre-protein crosslinking domain of SecA"/>
    <property type="match status" value="1"/>
</dbReference>
<dbReference type="PROSITE" id="PS01312">
    <property type="entry name" value="SECA"/>
    <property type="match status" value="1"/>
</dbReference>
<dbReference type="PROSITE" id="PS51196">
    <property type="entry name" value="SECA_MOTOR_DEAD"/>
    <property type="match status" value="1"/>
</dbReference>
<feature type="chain" id="PRO_0000428326" description="Protein translocase subunit SecA 1">
    <location>
        <begin position="1"/>
        <end position="949"/>
    </location>
</feature>
<feature type="region of interest" description="Disordered" evidence="3">
    <location>
        <begin position="869"/>
        <end position="949"/>
    </location>
</feature>
<feature type="compositionally biased region" description="Basic and acidic residues" evidence="3">
    <location>
        <begin position="925"/>
        <end position="934"/>
    </location>
</feature>
<feature type="binding site" evidence="2">
    <location>
        <position position="86"/>
    </location>
    <ligand>
        <name>ATP</name>
        <dbReference type="ChEBI" id="CHEBI:30616"/>
    </ligand>
</feature>
<feature type="binding site" evidence="2">
    <location>
        <begin position="104"/>
        <end position="108"/>
    </location>
    <ligand>
        <name>ATP</name>
        <dbReference type="ChEBI" id="CHEBI:30616"/>
    </ligand>
</feature>
<feature type="binding site" evidence="2">
    <location>
        <position position="493"/>
    </location>
    <ligand>
        <name>ATP</name>
        <dbReference type="ChEBI" id="CHEBI:30616"/>
    </ligand>
</feature>
<name>SECA1_MYCTO</name>
<organism>
    <name type="scientific">Mycobacterium tuberculosis (strain CDC 1551 / Oshkosh)</name>
    <dbReference type="NCBI Taxonomy" id="83331"/>
    <lineage>
        <taxon>Bacteria</taxon>
        <taxon>Bacillati</taxon>
        <taxon>Actinomycetota</taxon>
        <taxon>Actinomycetes</taxon>
        <taxon>Mycobacteriales</taxon>
        <taxon>Mycobacteriaceae</taxon>
        <taxon>Mycobacterium</taxon>
        <taxon>Mycobacterium tuberculosis complex</taxon>
    </lineage>
</organism>
<accession>P9WGP4</accession>
<accession>L0TF13</accession>
<accession>O05885</accession>
<accession>P0A5Y8</accession>
<accession>P71494</accession>
<gene>
    <name evidence="2" type="primary">secA1</name>
    <name type="ordered locus">MT3338</name>
</gene>
<evidence type="ECO:0000250" key="1"/>
<evidence type="ECO:0000255" key="2">
    <source>
        <dbReference type="HAMAP-Rule" id="MF_01382"/>
    </source>
</evidence>
<evidence type="ECO:0000256" key="3">
    <source>
        <dbReference type="SAM" id="MobiDB-lite"/>
    </source>
</evidence>
<comment type="function">
    <text evidence="2">Part of the Sec protein translocase complex. Interacts with the SecYEG preprotein conducting channel. Has a central role in coupling the hydrolysis of ATP to the transfer of proteins into and across the cell membrane, serving as an ATP-driven molecular motor driving the stepwise translocation of polypeptide chains across the membrane.</text>
</comment>
<comment type="catalytic activity">
    <reaction evidence="2">
        <text>ATP + H2O + cellular proteinSide 1 = ADP + phosphate + cellular proteinSide 2.</text>
        <dbReference type="EC" id="7.4.2.8"/>
    </reaction>
</comment>
<comment type="subunit">
    <text evidence="1">Part of the essential Sec protein translocation apparatus which comprises SecA, SecYEG and auxiliary proteins SecDF. Other proteins may also be involved (By similarity).</text>
</comment>
<comment type="subcellular location">
    <subcellularLocation>
        <location evidence="2">Cell membrane</location>
        <topology evidence="2">Peripheral membrane protein</topology>
        <orientation evidence="2">Cytoplasmic side</orientation>
    </subcellularLocation>
    <subcellularLocation>
        <location evidence="2">Cytoplasm</location>
    </subcellularLocation>
    <text evidence="2">Distribution is 50-50.</text>
</comment>
<comment type="similarity">
    <text evidence="2">Belongs to the SecA family.</text>
</comment>
<protein>
    <recommendedName>
        <fullName evidence="2">Protein translocase subunit SecA 1</fullName>
        <shortName>tbSecA</shortName>
        <ecNumber evidence="2">7.4.2.8</ecNumber>
    </recommendedName>
</protein>
<reference key="1">
    <citation type="journal article" date="2002" name="J. Bacteriol.">
        <title>Whole-genome comparison of Mycobacterium tuberculosis clinical and laboratory strains.</title>
        <authorList>
            <person name="Fleischmann R.D."/>
            <person name="Alland D."/>
            <person name="Eisen J.A."/>
            <person name="Carpenter L."/>
            <person name="White O."/>
            <person name="Peterson J.D."/>
            <person name="DeBoy R.T."/>
            <person name="Dodson R.J."/>
            <person name="Gwinn M.L."/>
            <person name="Haft D.H."/>
            <person name="Hickey E.K."/>
            <person name="Kolonay J.F."/>
            <person name="Nelson W.C."/>
            <person name="Umayam L.A."/>
            <person name="Ermolaeva M.D."/>
            <person name="Salzberg S.L."/>
            <person name="Delcher A."/>
            <person name="Utterback T.R."/>
            <person name="Weidman J.F."/>
            <person name="Khouri H.M."/>
            <person name="Gill J."/>
            <person name="Mikula A."/>
            <person name="Bishai W."/>
            <person name="Jacobs W.R. Jr."/>
            <person name="Venter J.C."/>
            <person name="Fraser C.M."/>
        </authorList>
    </citation>
    <scope>NUCLEOTIDE SEQUENCE [LARGE SCALE GENOMIC DNA]</scope>
    <source>
        <strain>CDC 1551 / Oshkosh</strain>
    </source>
</reference>
<proteinExistence type="inferred from homology"/>
<sequence length="949" mass="106022">MLSKLLRLGEGRMVKRLKKVADYVGTLSDDVEKLTDAELRAKTDEFKRRLADQKNPETLDDLLPEAFAVAREAAWRVLDQRPFDVQVMGAAALHLGNVAEMKTGEGKTLTCVLPAYLNALAGNGVHIVTVNDYLAKRDSEWMGRVHRFLGLQVGVILATMTPDERRVAYNADITYGTNNEFGFDYLRDNMAHSLDDLVQRGHHYAIVDEVDSILIDEARTPLIISGPADGASNWYTEFARLAPLMEKDVHYEVDLRKRTVGVHEKGVEFVEDQLGIDNLYEAANSPLVSYLNNALKAKELFSRDKDYIVRDGEVLIVDEFTGRVLIGRRYNEGMHQAIEAKEHVEIKAENQTLATITLQNYFRLYDKLAGMTGTAQTEAAELHEIYKLGVVSIPTNMPMIREDQSDLIYKTEEAKYIAVVDDVAERYAKGQPVLIGTTSVERSEYLSRQFTKRRIPHNVLNAKYHEQEATIIAVAGRRGGVTVATNMAGRGTDIVLGGNVDFLTDQRLRERGLDPVETPEEYEAAWHSELPIVKEEASKEAKEVIEAGGLYVLGTERHESRRIDNQLRGRSGRQGDPGESRFYLSLGDELMRRFNGAALETLLTRLNLPDDVPIEAKMVTRAIKSAQTQVEQQNFEVRKNVLKYDEVMNQQRKVIYAERRRILEGENLKDQALDMVRDVITAYVDGATGEGYAEDWDLDALWTALKTLYPVGITADSLTRKDHEFERDDLTREELLEALLKDAERAYAAREAELEEIAGEGAMRQLERNVLLNVIDRKWREHLYEMDYLKEGIGLRAMAQRDPLVEYQREGYDMFMAMLDGMKEESVGFLFNVTVEAVPAPPVAPAAEPAELAEFAAAAAAAAQQRSAVDGGARERAPSALRAKGVASESPALTYSGPAEDGSAQVQRNGGGAHKTPAGVPAGASRRERREAARRQGRGAKPPKSVKKR</sequence>
<keyword id="KW-0067">ATP-binding</keyword>
<keyword id="KW-1003">Cell membrane</keyword>
<keyword id="KW-0963">Cytoplasm</keyword>
<keyword id="KW-0472">Membrane</keyword>
<keyword id="KW-0547">Nucleotide-binding</keyword>
<keyword id="KW-0653">Protein transport</keyword>
<keyword id="KW-1185">Reference proteome</keyword>
<keyword id="KW-1278">Translocase</keyword>
<keyword id="KW-0811">Translocation</keyword>
<keyword id="KW-0813">Transport</keyword>